<keyword id="KW-0687">Ribonucleoprotein</keyword>
<keyword id="KW-0689">Ribosomal protein</keyword>
<accession>A7WYW4</accession>
<protein>
    <recommendedName>
        <fullName evidence="1">Large ribosomal subunit protein bL12</fullName>
    </recommendedName>
    <alternativeName>
        <fullName evidence="2">50S ribosomal protein L7/L12</fullName>
    </alternativeName>
</protein>
<feature type="chain" id="PRO_1000007095" description="Large ribosomal subunit protein bL12">
    <location>
        <begin position="1"/>
        <end position="122"/>
    </location>
</feature>
<sequence>MANHEQIIEAIKEMSVLELNDLVKAIEEEFGVTAAAPVAVAGAAGGADAAAEKTEFDVELTSAGSSKIKVVKAVKEATGLGLKDAKELVDGAPKVIKEALPKEEAEKLKEQLEEVGATVELK</sequence>
<organism>
    <name type="scientific">Staphylococcus aureus (strain Mu3 / ATCC 700698)</name>
    <dbReference type="NCBI Taxonomy" id="418127"/>
    <lineage>
        <taxon>Bacteria</taxon>
        <taxon>Bacillati</taxon>
        <taxon>Bacillota</taxon>
        <taxon>Bacilli</taxon>
        <taxon>Bacillales</taxon>
        <taxon>Staphylococcaceae</taxon>
        <taxon>Staphylococcus</taxon>
    </lineage>
</organism>
<comment type="function">
    <text evidence="1">Forms part of the ribosomal stalk which helps the ribosome interact with GTP-bound translation factors. Is thus essential for accurate translation.</text>
</comment>
<comment type="subunit">
    <text evidence="1">Homodimer. Part of the ribosomal stalk of the 50S ribosomal subunit. Forms a multimeric L10(L12)X complex, where L10 forms an elongated spine to which 2 to 4 L12 dimers bind in a sequential fashion. Binds GTP-bound translation factors.</text>
</comment>
<comment type="similarity">
    <text evidence="1">Belongs to the bacterial ribosomal protein bL12 family.</text>
</comment>
<gene>
    <name evidence="1" type="primary">rplL</name>
    <name type="ordered locus">SAHV_0538</name>
</gene>
<dbReference type="EMBL" id="AP009324">
    <property type="protein sequence ID" value="BAF77421.1"/>
    <property type="molecule type" value="Genomic_DNA"/>
</dbReference>
<dbReference type="RefSeq" id="WP_001273586.1">
    <property type="nucleotide sequence ID" value="NZ_CTYB01000013.1"/>
</dbReference>
<dbReference type="SMR" id="A7WYW4"/>
<dbReference type="GeneID" id="98344874"/>
<dbReference type="KEGG" id="saw:SAHV_0538"/>
<dbReference type="HOGENOM" id="CLU_086499_3_2_9"/>
<dbReference type="GO" id="GO:0022625">
    <property type="term" value="C:cytosolic large ribosomal subunit"/>
    <property type="evidence" value="ECO:0007669"/>
    <property type="project" value="TreeGrafter"/>
</dbReference>
<dbReference type="GO" id="GO:0003729">
    <property type="term" value="F:mRNA binding"/>
    <property type="evidence" value="ECO:0007669"/>
    <property type="project" value="TreeGrafter"/>
</dbReference>
<dbReference type="GO" id="GO:0003735">
    <property type="term" value="F:structural constituent of ribosome"/>
    <property type="evidence" value="ECO:0007669"/>
    <property type="project" value="InterPro"/>
</dbReference>
<dbReference type="GO" id="GO:0006412">
    <property type="term" value="P:translation"/>
    <property type="evidence" value="ECO:0007669"/>
    <property type="project" value="UniProtKB-UniRule"/>
</dbReference>
<dbReference type="CDD" id="cd00387">
    <property type="entry name" value="Ribosomal_L7_L12"/>
    <property type="match status" value="1"/>
</dbReference>
<dbReference type="FunFam" id="1.20.5.710:FF:000002">
    <property type="entry name" value="50S ribosomal protein L7/L12"/>
    <property type="match status" value="1"/>
</dbReference>
<dbReference type="FunFam" id="3.30.1390.10:FF:000001">
    <property type="entry name" value="50S ribosomal protein L7/L12"/>
    <property type="match status" value="1"/>
</dbReference>
<dbReference type="Gene3D" id="3.30.1390.10">
    <property type="match status" value="1"/>
</dbReference>
<dbReference type="Gene3D" id="1.20.5.710">
    <property type="entry name" value="Single helix bin"/>
    <property type="match status" value="1"/>
</dbReference>
<dbReference type="HAMAP" id="MF_00368">
    <property type="entry name" value="Ribosomal_bL12"/>
    <property type="match status" value="1"/>
</dbReference>
<dbReference type="InterPro" id="IPR000206">
    <property type="entry name" value="Ribosomal_bL12"/>
</dbReference>
<dbReference type="InterPro" id="IPR013823">
    <property type="entry name" value="Ribosomal_bL12_C"/>
</dbReference>
<dbReference type="InterPro" id="IPR014719">
    <property type="entry name" value="Ribosomal_bL12_C/ClpS-like"/>
</dbReference>
<dbReference type="InterPro" id="IPR008932">
    <property type="entry name" value="Ribosomal_bL12_oligo"/>
</dbReference>
<dbReference type="InterPro" id="IPR036235">
    <property type="entry name" value="Ribosomal_bL12_oligo_N_sf"/>
</dbReference>
<dbReference type="NCBIfam" id="TIGR00855">
    <property type="entry name" value="L12"/>
    <property type="match status" value="1"/>
</dbReference>
<dbReference type="PANTHER" id="PTHR45987">
    <property type="entry name" value="39S RIBOSOMAL PROTEIN L12"/>
    <property type="match status" value="1"/>
</dbReference>
<dbReference type="PANTHER" id="PTHR45987:SF4">
    <property type="entry name" value="LARGE RIBOSOMAL SUBUNIT PROTEIN BL12M"/>
    <property type="match status" value="1"/>
</dbReference>
<dbReference type="Pfam" id="PF00542">
    <property type="entry name" value="Ribosomal_L12"/>
    <property type="match status" value="1"/>
</dbReference>
<dbReference type="Pfam" id="PF16320">
    <property type="entry name" value="Ribosomal_L12_N"/>
    <property type="match status" value="1"/>
</dbReference>
<dbReference type="SUPFAM" id="SSF54736">
    <property type="entry name" value="ClpS-like"/>
    <property type="match status" value="1"/>
</dbReference>
<dbReference type="SUPFAM" id="SSF48300">
    <property type="entry name" value="Ribosomal protein L7/12, oligomerisation (N-terminal) domain"/>
    <property type="match status" value="1"/>
</dbReference>
<reference key="1">
    <citation type="journal article" date="2008" name="Antimicrob. Agents Chemother.">
        <title>Mutated response regulator graR is responsible for phenotypic conversion of Staphylococcus aureus from heterogeneous vancomycin-intermediate resistance to vancomycin-intermediate resistance.</title>
        <authorList>
            <person name="Neoh H.-M."/>
            <person name="Cui L."/>
            <person name="Yuzawa H."/>
            <person name="Takeuchi F."/>
            <person name="Matsuo M."/>
            <person name="Hiramatsu K."/>
        </authorList>
    </citation>
    <scope>NUCLEOTIDE SEQUENCE [LARGE SCALE GENOMIC DNA]</scope>
    <source>
        <strain>Mu3 / ATCC 700698</strain>
    </source>
</reference>
<proteinExistence type="inferred from homology"/>
<name>RL7_STAA1</name>
<evidence type="ECO:0000255" key="1">
    <source>
        <dbReference type="HAMAP-Rule" id="MF_00368"/>
    </source>
</evidence>
<evidence type="ECO:0000305" key="2"/>